<proteinExistence type="inferred from homology"/>
<protein>
    <recommendedName>
        <fullName evidence="1">S-adenosylmethionine synthase</fullName>
        <shortName evidence="1">AdoMet synthase</shortName>
        <ecNumber evidence="1">2.5.1.6</ecNumber>
    </recommendedName>
    <alternativeName>
        <fullName evidence="1">MAT</fullName>
    </alternativeName>
    <alternativeName>
        <fullName evidence="1">Methionine adenosyltransferase</fullName>
    </alternativeName>
</protein>
<feature type="chain" id="PRO_0000302906" description="S-adenosylmethionine synthase">
    <location>
        <begin position="1"/>
        <end position="391"/>
    </location>
</feature>
<feature type="region of interest" description="Flexible loop" evidence="1">
    <location>
        <begin position="98"/>
        <end position="108"/>
    </location>
</feature>
<feature type="binding site" description="in other chain" evidence="1">
    <location>
        <position position="14"/>
    </location>
    <ligand>
        <name>ATP</name>
        <dbReference type="ChEBI" id="CHEBI:30616"/>
        <note>ligand shared between two neighboring subunits</note>
    </ligand>
</feature>
<feature type="binding site" evidence="1">
    <location>
        <position position="16"/>
    </location>
    <ligand>
        <name>Mg(2+)</name>
        <dbReference type="ChEBI" id="CHEBI:18420"/>
    </ligand>
</feature>
<feature type="binding site" evidence="1">
    <location>
        <position position="42"/>
    </location>
    <ligand>
        <name>K(+)</name>
        <dbReference type="ChEBI" id="CHEBI:29103"/>
    </ligand>
</feature>
<feature type="binding site" description="in other chain" evidence="1">
    <location>
        <position position="55"/>
    </location>
    <ligand>
        <name>L-methionine</name>
        <dbReference type="ChEBI" id="CHEBI:57844"/>
        <note>ligand shared between two neighboring subunits</note>
    </ligand>
</feature>
<feature type="binding site" description="in other chain" evidence="1">
    <location>
        <position position="98"/>
    </location>
    <ligand>
        <name>L-methionine</name>
        <dbReference type="ChEBI" id="CHEBI:57844"/>
        <note>ligand shared between two neighboring subunits</note>
    </ligand>
</feature>
<feature type="binding site" description="in other chain" evidence="1">
    <location>
        <begin position="172"/>
        <end position="174"/>
    </location>
    <ligand>
        <name>ATP</name>
        <dbReference type="ChEBI" id="CHEBI:30616"/>
        <note>ligand shared between two neighboring subunits</note>
    </ligand>
</feature>
<feature type="binding site" description="in other chain" evidence="1">
    <location>
        <begin position="238"/>
        <end position="239"/>
    </location>
    <ligand>
        <name>ATP</name>
        <dbReference type="ChEBI" id="CHEBI:30616"/>
        <note>ligand shared between two neighboring subunits</note>
    </ligand>
</feature>
<feature type="binding site" evidence="1">
    <location>
        <position position="247"/>
    </location>
    <ligand>
        <name>ATP</name>
        <dbReference type="ChEBI" id="CHEBI:30616"/>
        <note>ligand shared between two neighboring subunits</note>
    </ligand>
</feature>
<feature type="binding site" evidence="1">
    <location>
        <position position="247"/>
    </location>
    <ligand>
        <name>L-methionine</name>
        <dbReference type="ChEBI" id="CHEBI:57844"/>
        <note>ligand shared between two neighboring subunits</note>
    </ligand>
</feature>
<feature type="binding site" description="in other chain" evidence="1">
    <location>
        <begin position="253"/>
        <end position="254"/>
    </location>
    <ligand>
        <name>ATP</name>
        <dbReference type="ChEBI" id="CHEBI:30616"/>
        <note>ligand shared between two neighboring subunits</note>
    </ligand>
</feature>
<feature type="binding site" evidence="1">
    <location>
        <position position="270"/>
    </location>
    <ligand>
        <name>ATP</name>
        <dbReference type="ChEBI" id="CHEBI:30616"/>
        <note>ligand shared between two neighboring subunits</note>
    </ligand>
</feature>
<feature type="binding site" evidence="1">
    <location>
        <position position="274"/>
    </location>
    <ligand>
        <name>ATP</name>
        <dbReference type="ChEBI" id="CHEBI:30616"/>
        <note>ligand shared between two neighboring subunits</note>
    </ligand>
</feature>
<feature type="binding site" description="in other chain" evidence="1">
    <location>
        <position position="278"/>
    </location>
    <ligand>
        <name>L-methionine</name>
        <dbReference type="ChEBI" id="CHEBI:57844"/>
        <note>ligand shared between two neighboring subunits</note>
    </ligand>
</feature>
<keyword id="KW-0067">ATP-binding</keyword>
<keyword id="KW-0963">Cytoplasm</keyword>
<keyword id="KW-0460">Magnesium</keyword>
<keyword id="KW-0479">Metal-binding</keyword>
<keyword id="KW-0547">Nucleotide-binding</keyword>
<keyword id="KW-0554">One-carbon metabolism</keyword>
<keyword id="KW-0630">Potassium</keyword>
<keyword id="KW-0808">Transferase</keyword>
<dbReference type="EC" id="2.5.1.6" evidence="1"/>
<dbReference type="EMBL" id="CP000246">
    <property type="protein sequence ID" value="ABG83227.1"/>
    <property type="molecule type" value="Genomic_DNA"/>
</dbReference>
<dbReference type="RefSeq" id="WP_003452418.1">
    <property type="nucleotide sequence ID" value="NC_008261.1"/>
</dbReference>
<dbReference type="SMR" id="Q0TND4"/>
<dbReference type="STRING" id="195103.CPF_2435"/>
<dbReference type="PaxDb" id="195103-CPF_2435"/>
<dbReference type="GeneID" id="93001287"/>
<dbReference type="KEGG" id="cpf:CPF_2435"/>
<dbReference type="eggNOG" id="COG0192">
    <property type="taxonomic scope" value="Bacteria"/>
</dbReference>
<dbReference type="HOGENOM" id="CLU_041802_1_1_9"/>
<dbReference type="UniPathway" id="UPA00315">
    <property type="reaction ID" value="UER00080"/>
</dbReference>
<dbReference type="Proteomes" id="UP000001823">
    <property type="component" value="Chromosome"/>
</dbReference>
<dbReference type="GO" id="GO:0005737">
    <property type="term" value="C:cytoplasm"/>
    <property type="evidence" value="ECO:0007669"/>
    <property type="project" value="UniProtKB-SubCell"/>
</dbReference>
<dbReference type="GO" id="GO:0005524">
    <property type="term" value="F:ATP binding"/>
    <property type="evidence" value="ECO:0007669"/>
    <property type="project" value="UniProtKB-UniRule"/>
</dbReference>
<dbReference type="GO" id="GO:0000287">
    <property type="term" value="F:magnesium ion binding"/>
    <property type="evidence" value="ECO:0007669"/>
    <property type="project" value="UniProtKB-UniRule"/>
</dbReference>
<dbReference type="GO" id="GO:0004478">
    <property type="term" value="F:methionine adenosyltransferase activity"/>
    <property type="evidence" value="ECO:0007669"/>
    <property type="project" value="UniProtKB-UniRule"/>
</dbReference>
<dbReference type="GO" id="GO:0006730">
    <property type="term" value="P:one-carbon metabolic process"/>
    <property type="evidence" value="ECO:0007669"/>
    <property type="project" value="UniProtKB-KW"/>
</dbReference>
<dbReference type="GO" id="GO:0006556">
    <property type="term" value="P:S-adenosylmethionine biosynthetic process"/>
    <property type="evidence" value="ECO:0007669"/>
    <property type="project" value="UniProtKB-UniRule"/>
</dbReference>
<dbReference type="CDD" id="cd18079">
    <property type="entry name" value="S-AdoMet_synt"/>
    <property type="match status" value="1"/>
</dbReference>
<dbReference type="FunFam" id="3.30.300.10:FF:000003">
    <property type="entry name" value="S-adenosylmethionine synthase"/>
    <property type="match status" value="1"/>
</dbReference>
<dbReference type="FunFam" id="3.30.300.10:FF:000004">
    <property type="entry name" value="S-adenosylmethionine synthase"/>
    <property type="match status" value="1"/>
</dbReference>
<dbReference type="Gene3D" id="3.30.300.10">
    <property type="match status" value="3"/>
</dbReference>
<dbReference type="HAMAP" id="MF_00086">
    <property type="entry name" value="S_AdoMet_synth1"/>
    <property type="match status" value="1"/>
</dbReference>
<dbReference type="InterPro" id="IPR022631">
    <property type="entry name" value="ADOMET_SYNTHASE_CS"/>
</dbReference>
<dbReference type="InterPro" id="IPR022630">
    <property type="entry name" value="S-AdoMet_synt_C"/>
</dbReference>
<dbReference type="InterPro" id="IPR022629">
    <property type="entry name" value="S-AdoMet_synt_central"/>
</dbReference>
<dbReference type="InterPro" id="IPR022628">
    <property type="entry name" value="S-AdoMet_synt_N"/>
</dbReference>
<dbReference type="InterPro" id="IPR002133">
    <property type="entry name" value="S-AdoMet_synthetase"/>
</dbReference>
<dbReference type="InterPro" id="IPR022636">
    <property type="entry name" value="S-AdoMet_synthetase_sfam"/>
</dbReference>
<dbReference type="NCBIfam" id="TIGR01034">
    <property type="entry name" value="metK"/>
    <property type="match status" value="1"/>
</dbReference>
<dbReference type="PANTHER" id="PTHR11964">
    <property type="entry name" value="S-ADENOSYLMETHIONINE SYNTHETASE"/>
    <property type="match status" value="1"/>
</dbReference>
<dbReference type="Pfam" id="PF02773">
    <property type="entry name" value="S-AdoMet_synt_C"/>
    <property type="match status" value="1"/>
</dbReference>
<dbReference type="Pfam" id="PF02772">
    <property type="entry name" value="S-AdoMet_synt_M"/>
    <property type="match status" value="1"/>
</dbReference>
<dbReference type="Pfam" id="PF00438">
    <property type="entry name" value="S-AdoMet_synt_N"/>
    <property type="match status" value="1"/>
</dbReference>
<dbReference type="PIRSF" id="PIRSF000497">
    <property type="entry name" value="MAT"/>
    <property type="match status" value="1"/>
</dbReference>
<dbReference type="SUPFAM" id="SSF55973">
    <property type="entry name" value="S-adenosylmethionine synthetase"/>
    <property type="match status" value="3"/>
</dbReference>
<dbReference type="PROSITE" id="PS00376">
    <property type="entry name" value="ADOMET_SYNTHASE_1"/>
    <property type="match status" value="1"/>
</dbReference>
<dbReference type="PROSITE" id="PS00377">
    <property type="entry name" value="ADOMET_SYNTHASE_2"/>
    <property type="match status" value="1"/>
</dbReference>
<gene>
    <name evidence="1" type="primary">metK</name>
    <name type="ordered locus">CPF_2435</name>
</gene>
<organism>
    <name type="scientific">Clostridium perfringens (strain ATCC 13124 / DSM 756 / JCM 1290 / NCIMB 6125 / NCTC 8237 / Type A)</name>
    <dbReference type="NCBI Taxonomy" id="195103"/>
    <lineage>
        <taxon>Bacteria</taxon>
        <taxon>Bacillati</taxon>
        <taxon>Bacillota</taxon>
        <taxon>Clostridia</taxon>
        <taxon>Eubacteriales</taxon>
        <taxon>Clostridiaceae</taxon>
        <taxon>Clostridium</taxon>
    </lineage>
</organism>
<name>METK_CLOP1</name>
<comment type="function">
    <text evidence="1">Catalyzes the formation of S-adenosylmethionine (AdoMet) from methionine and ATP. The overall synthetic reaction is composed of two sequential steps, AdoMet formation and the subsequent tripolyphosphate hydrolysis which occurs prior to release of AdoMet from the enzyme.</text>
</comment>
<comment type="catalytic activity">
    <reaction evidence="1">
        <text>L-methionine + ATP + H2O = S-adenosyl-L-methionine + phosphate + diphosphate</text>
        <dbReference type="Rhea" id="RHEA:21080"/>
        <dbReference type="ChEBI" id="CHEBI:15377"/>
        <dbReference type="ChEBI" id="CHEBI:30616"/>
        <dbReference type="ChEBI" id="CHEBI:33019"/>
        <dbReference type="ChEBI" id="CHEBI:43474"/>
        <dbReference type="ChEBI" id="CHEBI:57844"/>
        <dbReference type="ChEBI" id="CHEBI:59789"/>
        <dbReference type="EC" id="2.5.1.6"/>
    </reaction>
</comment>
<comment type="cofactor">
    <cofactor evidence="1">
        <name>Mg(2+)</name>
        <dbReference type="ChEBI" id="CHEBI:18420"/>
    </cofactor>
    <text evidence="1">Binds 2 divalent ions per subunit.</text>
</comment>
<comment type="cofactor">
    <cofactor evidence="1">
        <name>K(+)</name>
        <dbReference type="ChEBI" id="CHEBI:29103"/>
    </cofactor>
    <text evidence="1">Binds 1 potassium ion per subunit.</text>
</comment>
<comment type="pathway">
    <text evidence="1">Amino-acid biosynthesis; S-adenosyl-L-methionine biosynthesis; S-adenosyl-L-methionine from L-methionine: step 1/1.</text>
</comment>
<comment type="subunit">
    <text evidence="1">Homotetramer; dimer of dimers.</text>
</comment>
<comment type="subcellular location">
    <subcellularLocation>
        <location evidence="1">Cytoplasm</location>
    </subcellularLocation>
</comment>
<comment type="similarity">
    <text evidence="1">Belongs to the AdoMet synthase family.</text>
</comment>
<reference key="1">
    <citation type="journal article" date="2006" name="Genome Res.">
        <title>Skewed genomic variability in strains of the toxigenic bacterial pathogen, Clostridium perfringens.</title>
        <authorList>
            <person name="Myers G.S.A."/>
            <person name="Rasko D.A."/>
            <person name="Cheung J.K."/>
            <person name="Ravel J."/>
            <person name="Seshadri R."/>
            <person name="DeBoy R.T."/>
            <person name="Ren Q."/>
            <person name="Varga J."/>
            <person name="Awad M.M."/>
            <person name="Brinkac L.M."/>
            <person name="Daugherty S.C."/>
            <person name="Haft D.H."/>
            <person name="Dodson R.J."/>
            <person name="Madupu R."/>
            <person name="Nelson W.C."/>
            <person name="Rosovitz M.J."/>
            <person name="Sullivan S.A."/>
            <person name="Khouri H."/>
            <person name="Dimitrov G.I."/>
            <person name="Watkins K.L."/>
            <person name="Mulligan S."/>
            <person name="Benton J."/>
            <person name="Radune D."/>
            <person name="Fisher D.J."/>
            <person name="Atkins H.S."/>
            <person name="Hiscox T."/>
            <person name="Jost B.H."/>
            <person name="Billington S.J."/>
            <person name="Songer J.G."/>
            <person name="McClane B.A."/>
            <person name="Titball R.W."/>
            <person name="Rood J.I."/>
            <person name="Melville S.B."/>
            <person name="Paulsen I.T."/>
        </authorList>
    </citation>
    <scope>NUCLEOTIDE SEQUENCE [LARGE SCALE GENOMIC DNA]</scope>
    <source>
        <strain>ATCC 13124 / DSM 756 / JCM 1290 / NCIMB 6125 / NCTC 8237 / S 107 / Type A</strain>
    </source>
</reference>
<evidence type="ECO:0000255" key="1">
    <source>
        <dbReference type="HAMAP-Rule" id="MF_00086"/>
    </source>
</evidence>
<sequence>MRRLFTSESVTEGHPDKICDQISDAVLDAIFAKDPNARVACETAVTTGLVMVMGEITTNCYVDIPKIARETIKNIGYDRAKYGFDCETCSVMTTIDEQSSDIAMGVDEALESRAGEKIDIDAVGAGDQGMMFGFATNETEEFMPAPIAMAHRLSRRLTEVRKNGTLPYLRPDGKTQVTVEYENDKPVRIDAIVISTQHGPEVSQEQIQADLMEHVIKAVIPAELLDENTKYYINPTGRFVIGGPQGDAGLTGRKIIVDTYGGYGRHGGGAFSGKDPTKVDRSAAYAARWVAKNLVAAGIADKLEVQVAYAIGVAKPVSIIVDTFGTGKISDEEIVNIINKVFDLRPGAIIRDLDLRRPIYRQTAAYGHFGRTDLDLPWENLNKVEEIKKYL</sequence>
<accession>Q0TND4</accession>